<evidence type="ECO:0000250" key="1"/>
<evidence type="ECO:0000250" key="2">
    <source>
        <dbReference type="UniProtKB" id="O95551"/>
    </source>
</evidence>
<evidence type="ECO:0000250" key="3">
    <source>
        <dbReference type="UniProtKB" id="P31384"/>
    </source>
</evidence>
<evidence type="ECO:0000256" key="4">
    <source>
        <dbReference type="SAM" id="MobiDB-lite"/>
    </source>
</evidence>
<evidence type="ECO:0000305" key="5"/>
<accession>Q9C2R2</accession>
<accession>V5ILT7</accession>
<comment type="function">
    <text evidence="3">Acts as a catalytic component of the CCR4-NOT core complex, which in the nucleus seems to be a general transcription factor, and in the cytoplasm the major mRNA deadenylase involved in mRNA turnover (By similarity). Ccr4 has 3'-5' RNase activity with a strong preference for polyadenylated substrates and also low exonuclease activity towards single-stranded DNA (By similarity).</text>
</comment>
<comment type="catalytic activity">
    <reaction>
        <text>Exonucleolytic cleavage of poly(A) to 5'-AMP.</text>
        <dbReference type="EC" id="3.1.13.4"/>
    </reaction>
</comment>
<comment type="cofactor">
    <cofactor evidence="1">
        <name>Mg(2+)</name>
        <dbReference type="ChEBI" id="CHEBI:18420"/>
    </cofactor>
</comment>
<comment type="subcellular location">
    <subcellularLocation>
        <location evidence="1">Cytoplasm</location>
    </subcellularLocation>
    <subcellularLocation>
        <location evidence="1">Nucleus</location>
    </subcellularLocation>
</comment>
<comment type="similarity">
    <text evidence="5">Belongs to the CCR4/nocturin family.</text>
</comment>
<comment type="sequence caution" evidence="5">
    <conflict type="erroneous gene model prediction">
        <sequence resource="EMBL-CDS" id="CAC28578"/>
    </conflict>
</comment>
<name>CCR4_NEUCR</name>
<proteinExistence type="inferred from homology"/>
<protein>
    <recommendedName>
        <fullName evidence="5">CCR4-Not complex 3'-5'-exoribonuclease subunit Ccr4</fullName>
        <ecNumber>3.1.13.4</ecNumber>
    </recommendedName>
    <alternativeName>
        <fullName>Carbon catabolite repressor protein 4</fullName>
    </alternativeName>
    <alternativeName>
        <fullName>Cytoplasmic deadenylase</fullName>
    </alternativeName>
    <alternativeName>
        <fullName>Glucose-repressible alcohol dehydrogenase transcriptional effector</fullName>
    </alternativeName>
</protein>
<sequence length="793" mass="88752">MADGHRYMQQSFSTPLPTQFASNNNLATGLLLNSLLNQFIADPSAAQQQAAAQANPAHSSATQINRGMYGQNHPQGHNPRLNGAAPGRQPNMPMFYNHVPQQGHPHQGHNAHHQVLQAGHSGHGARNDLMSHSTFSSGIMGNASPYTTNNLQNGHSVAARGGPAEQPANEHWQKQMRLKEESDRAHSAMTEQHQPHYYARLKAPENKGIGGSLTAGGANASGDSEEEVRRRPYQVEKRNRRQDWHNLDMSGQGLRALSSALFSYDFLVELYIASNRLTFLPAEIGKLRHLKILEASNNLLSELPPEIGMCTSLEKLLLFDNQIRDLPYELGSLYKLDILGIEGNPINPGLREEIVERGTKSLINSLLEQAPVPLPPSPRKPIVVQEDVSPSLERIKVMTWNILCDKFATTNMYGYTPTGALSWEYRKERILQEIRDRDVDMLCLQEIATDVFRDFFSPELAQNDYKGVHWPRPKAKTMNEKDAAAVDGCAIFYKGSKWILLDKQLIDYANIAINRPDMKNQHDIFNRVMPKDNIGIICFFESRRTGARVIVANTHLAWEPTLADVKLVQTAILMENITKYAEKYVRWQPLKDKRGIQIPQSVSVESDIPKPEMPEPGPSQEYRSNTDIPLIVCGDYNSTQESSVYELLSMGRVTPEQSDFGGHQYGNFTRDGVAHPFSMRSAYVHLNGTPDELSFTNYVPGFQEVIDYIWYSTNTLEVVELLGPPDQNHLKRVPGFPNYHFPADHIQIMAEFVIKQRKGEKVKVIHGSGGGASGQQQQQQQLEGGQDFGSGSK</sequence>
<gene>
    <name type="primary">ccr4</name>
    <name type="ORF">NCU07779</name>
</gene>
<keyword id="KW-0963">Cytoplasm</keyword>
<keyword id="KW-0269">Exonuclease</keyword>
<keyword id="KW-0378">Hydrolase</keyword>
<keyword id="KW-0433">Leucine-rich repeat</keyword>
<keyword id="KW-0460">Magnesium</keyword>
<keyword id="KW-0479">Metal-binding</keyword>
<keyword id="KW-0540">Nuclease</keyword>
<keyword id="KW-0539">Nucleus</keyword>
<keyword id="KW-1185">Reference proteome</keyword>
<keyword id="KW-0677">Repeat</keyword>
<keyword id="KW-0694">RNA-binding</keyword>
<keyword id="KW-0804">Transcription</keyword>
<keyword id="KW-0805">Transcription regulation</keyword>
<feature type="chain" id="PRO_0000290615" description="CCR4-Not complex 3'-5'-exoribonuclease subunit Ccr4">
    <location>
        <begin position="1"/>
        <end position="793"/>
    </location>
</feature>
<feature type="repeat" description="LRR 1">
    <location>
        <begin position="241"/>
        <end position="264"/>
    </location>
</feature>
<feature type="repeat" description="LRR 2">
    <location>
        <begin position="266"/>
        <end position="287"/>
    </location>
</feature>
<feature type="repeat" description="LRR 3">
    <location>
        <begin position="289"/>
        <end position="310"/>
    </location>
</feature>
<feature type="repeat" description="LRR 4">
    <location>
        <begin position="312"/>
        <end position="334"/>
    </location>
</feature>
<feature type="repeat" description="LRR 5">
    <location>
        <begin position="335"/>
        <end position="354"/>
    </location>
</feature>
<feature type="region of interest" description="Disordered" evidence="4">
    <location>
        <begin position="50"/>
        <end position="85"/>
    </location>
</feature>
<feature type="region of interest" description="Disordered" evidence="4">
    <location>
        <begin position="208"/>
        <end position="239"/>
    </location>
</feature>
<feature type="region of interest" description="Disordered" evidence="4">
    <location>
        <begin position="764"/>
        <end position="793"/>
    </location>
</feature>
<feature type="compositionally biased region" description="Polar residues" evidence="4">
    <location>
        <begin position="56"/>
        <end position="65"/>
    </location>
</feature>
<feature type="compositionally biased region" description="Basic and acidic residues" evidence="4">
    <location>
        <begin position="227"/>
        <end position="239"/>
    </location>
</feature>
<feature type="compositionally biased region" description="Low complexity" evidence="4">
    <location>
        <begin position="774"/>
        <end position="785"/>
    </location>
</feature>
<feature type="binding site" evidence="2">
    <location>
        <position position="446"/>
    </location>
    <ligand>
        <name>Mg(2+)</name>
        <dbReference type="ChEBI" id="CHEBI:18420"/>
    </ligand>
</feature>
<organism>
    <name type="scientific">Neurospora crassa (strain ATCC 24698 / 74-OR23-1A / CBS 708.71 / DSM 1257 / FGSC 987)</name>
    <dbReference type="NCBI Taxonomy" id="367110"/>
    <lineage>
        <taxon>Eukaryota</taxon>
        <taxon>Fungi</taxon>
        <taxon>Dikarya</taxon>
        <taxon>Ascomycota</taxon>
        <taxon>Pezizomycotina</taxon>
        <taxon>Sordariomycetes</taxon>
        <taxon>Sordariomycetidae</taxon>
        <taxon>Sordariales</taxon>
        <taxon>Sordariaceae</taxon>
        <taxon>Neurospora</taxon>
    </lineage>
</organism>
<reference key="1">
    <citation type="journal article" date="2003" name="Nucleic Acids Res.">
        <title>What's in the genome of a filamentous fungus? Analysis of the Neurospora genome sequence.</title>
        <authorList>
            <person name="Mannhaupt G."/>
            <person name="Montrone C."/>
            <person name="Haase D."/>
            <person name="Mewes H.-W."/>
            <person name="Aign V."/>
            <person name="Hoheisel J.D."/>
            <person name="Fartmann B."/>
            <person name="Nyakatura G."/>
            <person name="Kempken F."/>
            <person name="Maier J."/>
            <person name="Schulte U."/>
        </authorList>
    </citation>
    <scope>NUCLEOTIDE SEQUENCE [LARGE SCALE GENOMIC DNA]</scope>
    <source>
        <strain>ATCC 24698 / 74-OR23-1A / CBS 708.71 / DSM 1257 / FGSC 987</strain>
    </source>
</reference>
<reference key="2">
    <citation type="journal article" date="2003" name="Nature">
        <title>The genome sequence of the filamentous fungus Neurospora crassa.</title>
        <authorList>
            <person name="Galagan J.E."/>
            <person name="Calvo S.E."/>
            <person name="Borkovich K.A."/>
            <person name="Selker E.U."/>
            <person name="Read N.D."/>
            <person name="Jaffe D.B."/>
            <person name="FitzHugh W."/>
            <person name="Ma L.-J."/>
            <person name="Smirnov S."/>
            <person name="Purcell S."/>
            <person name="Rehman B."/>
            <person name="Elkins T."/>
            <person name="Engels R."/>
            <person name="Wang S."/>
            <person name="Nielsen C.B."/>
            <person name="Butler J."/>
            <person name="Endrizzi M."/>
            <person name="Qui D."/>
            <person name="Ianakiev P."/>
            <person name="Bell-Pedersen D."/>
            <person name="Nelson M.A."/>
            <person name="Werner-Washburne M."/>
            <person name="Selitrennikoff C.P."/>
            <person name="Kinsey J.A."/>
            <person name="Braun E.L."/>
            <person name="Zelter A."/>
            <person name="Schulte U."/>
            <person name="Kothe G.O."/>
            <person name="Jedd G."/>
            <person name="Mewes H.-W."/>
            <person name="Staben C."/>
            <person name="Marcotte E."/>
            <person name="Greenberg D."/>
            <person name="Roy A."/>
            <person name="Foley K."/>
            <person name="Naylor J."/>
            <person name="Stange-Thomann N."/>
            <person name="Barrett R."/>
            <person name="Gnerre S."/>
            <person name="Kamal M."/>
            <person name="Kamvysselis M."/>
            <person name="Mauceli E.W."/>
            <person name="Bielke C."/>
            <person name="Rudd S."/>
            <person name="Frishman D."/>
            <person name="Krystofova S."/>
            <person name="Rasmussen C."/>
            <person name="Metzenberg R.L."/>
            <person name="Perkins D.D."/>
            <person name="Kroken S."/>
            <person name="Cogoni C."/>
            <person name="Macino G."/>
            <person name="Catcheside D.E.A."/>
            <person name="Li W."/>
            <person name="Pratt R.J."/>
            <person name="Osmani S.A."/>
            <person name="DeSouza C.P.C."/>
            <person name="Glass N.L."/>
            <person name="Orbach M.J."/>
            <person name="Berglund J.A."/>
            <person name="Voelker R."/>
            <person name="Yarden O."/>
            <person name="Plamann M."/>
            <person name="Seiler S."/>
            <person name="Dunlap J.C."/>
            <person name="Radford A."/>
            <person name="Aramayo R."/>
            <person name="Natvig D.O."/>
            <person name="Alex L.A."/>
            <person name="Mannhaupt G."/>
            <person name="Ebbole D.J."/>
            <person name="Freitag M."/>
            <person name="Paulsen I."/>
            <person name="Sachs M.S."/>
            <person name="Lander E.S."/>
            <person name="Nusbaum C."/>
            <person name="Birren B.W."/>
        </authorList>
    </citation>
    <scope>NUCLEOTIDE SEQUENCE [LARGE SCALE GENOMIC DNA]</scope>
    <source>
        <strain>ATCC 24698 / 74-OR23-1A / CBS 708.71 / DSM 1257 / FGSC 987</strain>
    </source>
</reference>
<dbReference type="EC" id="3.1.13.4"/>
<dbReference type="EMBL" id="AL513410">
    <property type="protein sequence ID" value="CAC28578.1"/>
    <property type="status" value="ALT_SEQ"/>
    <property type="molecule type" value="Genomic_DNA"/>
</dbReference>
<dbReference type="EMBL" id="CM002240">
    <property type="protein sequence ID" value="ESA42355.1"/>
    <property type="molecule type" value="Genomic_DNA"/>
</dbReference>
<dbReference type="EMBL" id="CM002240">
    <property type="protein sequence ID" value="ESA42356.1"/>
    <property type="molecule type" value="Genomic_DNA"/>
</dbReference>
<dbReference type="RefSeq" id="XP_011394724.1">
    <property type="nucleotide sequence ID" value="XM_011396422.1"/>
</dbReference>
<dbReference type="RefSeq" id="XP_011394725.1">
    <property type="nucleotide sequence ID" value="XM_011396423.1"/>
</dbReference>
<dbReference type="SMR" id="Q9C2R2"/>
<dbReference type="FunCoup" id="Q9C2R2">
    <property type="interactions" value="428"/>
</dbReference>
<dbReference type="STRING" id="367110.Q9C2R2"/>
<dbReference type="PaxDb" id="5141-EFNCRP00000007975"/>
<dbReference type="EnsemblFungi" id="ESA42355">
    <property type="protein sequence ID" value="ESA42355"/>
    <property type="gene ID" value="NCU07779"/>
</dbReference>
<dbReference type="EnsemblFungi" id="ESA42356">
    <property type="protein sequence ID" value="ESA42356"/>
    <property type="gene ID" value="NCU07779"/>
</dbReference>
<dbReference type="GeneID" id="3874847"/>
<dbReference type="KEGG" id="ncr:NCU07779"/>
<dbReference type="VEuPathDB" id="FungiDB:NCU07779"/>
<dbReference type="HOGENOM" id="CLU_016428_4_0_1"/>
<dbReference type="InParanoid" id="Q9C2R2"/>
<dbReference type="OrthoDB" id="428734at2759"/>
<dbReference type="Proteomes" id="UP000001805">
    <property type="component" value="Chromosome 2, Linkage Group V"/>
</dbReference>
<dbReference type="GO" id="GO:0030015">
    <property type="term" value="C:CCR4-NOT core complex"/>
    <property type="evidence" value="ECO:0007669"/>
    <property type="project" value="EnsemblFungi"/>
</dbReference>
<dbReference type="GO" id="GO:0005634">
    <property type="term" value="C:nucleus"/>
    <property type="evidence" value="ECO:0007669"/>
    <property type="project" value="UniProtKB-SubCell"/>
</dbReference>
<dbReference type="GO" id="GO:0000932">
    <property type="term" value="C:P-body"/>
    <property type="evidence" value="ECO:0007669"/>
    <property type="project" value="EnsemblFungi"/>
</dbReference>
<dbReference type="GO" id="GO:0000175">
    <property type="term" value="F:3'-5'-RNA exonuclease activity"/>
    <property type="evidence" value="ECO:0000318"/>
    <property type="project" value="GO_Central"/>
</dbReference>
<dbReference type="GO" id="GO:0046872">
    <property type="term" value="F:metal ion binding"/>
    <property type="evidence" value="ECO:0007669"/>
    <property type="project" value="UniProtKB-KW"/>
</dbReference>
<dbReference type="GO" id="GO:0004535">
    <property type="term" value="F:poly(A)-specific ribonuclease activity"/>
    <property type="evidence" value="ECO:0007669"/>
    <property type="project" value="UniProtKB-EC"/>
</dbReference>
<dbReference type="GO" id="GO:0003723">
    <property type="term" value="F:RNA binding"/>
    <property type="evidence" value="ECO:0007669"/>
    <property type="project" value="UniProtKB-KW"/>
</dbReference>
<dbReference type="GO" id="GO:0000289">
    <property type="term" value="P:nuclear-transcribed mRNA poly(A) tail shortening"/>
    <property type="evidence" value="ECO:0007669"/>
    <property type="project" value="EnsemblFungi"/>
</dbReference>
<dbReference type="CDD" id="cd09097">
    <property type="entry name" value="Deadenylase_CCR4"/>
    <property type="match status" value="1"/>
</dbReference>
<dbReference type="FunFam" id="3.60.10.10:FF:000037">
    <property type="entry name" value="Glucose-repressible alcohol dehydrogenase transcriptional effector"/>
    <property type="match status" value="1"/>
</dbReference>
<dbReference type="FunFam" id="3.80.10.10:FF:000447">
    <property type="entry name" value="Glucose-repressible alcohol dehydrogenase transcriptional effector"/>
    <property type="match status" value="1"/>
</dbReference>
<dbReference type="Gene3D" id="3.60.10.10">
    <property type="entry name" value="Endonuclease/exonuclease/phosphatase"/>
    <property type="match status" value="1"/>
</dbReference>
<dbReference type="Gene3D" id="3.80.10.10">
    <property type="entry name" value="Ribonuclease Inhibitor"/>
    <property type="match status" value="1"/>
</dbReference>
<dbReference type="InterPro" id="IPR050410">
    <property type="entry name" value="CCR4/nocturin_mRNA_transcr"/>
</dbReference>
<dbReference type="InterPro" id="IPR036691">
    <property type="entry name" value="Endo/exonu/phosph_ase_sf"/>
</dbReference>
<dbReference type="InterPro" id="IPR005135">
    <property type="entry name" value="Endo/exonuclease/phosphatase"/>
</dbReference>
<dbReference type="InterPro" id="IPR001611">
    <property type="entry name" value="Leu-rich_rpt"/>
</dbReference>
<dbReference type="InterPro" id="IPR003591">
    <property type="entry name" value="Leu-rich_rpt_typical-subtyp"/>
</dbReference>
<dbReference type="InterPro" id="IPR032675">
    <property type="entry name" value="LRR_dom_sf"/>
</dbReference>
<dbReference type="PANTHER" id="PTHR12121">
    <property type="entry name" value="CARBON CATABOLITE REPRESSOR PROTEIN 4"/>
    <property type="match status" value="1"/>
</dbReference>
<dbReference type="PANTHER" id="PTHR12121:SF100">
    <property type="entry name" value="POLY(A)-SPECIFIC RIBONUCLEASE"/>
    <property type="match status" value="1"/>
</dbReference>
<dbReference type="Pfam" id="PF03372">
    <property type="entry name" value="Exo_endo_phos"/>
    <property type="match status" value="2"/>
</dbReference>
<dbReference type="SMART" id="SM00369">
    <property type="entry name" value="LRR_TYP"/>
    <property type="match status" value="2"/>
</dbReference>
<dbReference type="SUPFAM" id="SSF56219">
    <property type="entry name" value="DNase I-like"/>
    <property type="match status" value="1"/>
</dbReference>
<dbReference type="SUPFAM" id="SSF52058">
    <property type="entry name" value="L domain-like"/>
    <property type="match status" value="1"/>
</dbReference>
<dbReference type="PROSITE" id="PS51450">
    <property type="entry name" value="LRR"/>
    <property type="match status" value="3"/>
</dbReference>